<sequence>MGMRMMFTVFLLVVLTTTVVSFPSDSASDVRDDEAKDERSDMYKSKRNGRCCHPACGKHFSCGR</sequence>
<reference key="1">
    <citation type="journal article" date="2012" name="J. Proteomics">
        <title>Large-scale discovery of conopeptides and conoproteins in the injectable venom of a fish-hunting cone snail using a combined proteomic and transcriptomic approach.</title>
        <authorList>
            <person name="Violette A."/>
            <person name="Biass D."/>
            <person name="Dutertre S."/>
            <person name="Koua D."/>
            <person name="Piquemal D."/>
            <person name="Pierrat F."/>
            <person name="Stocklin R."/>
            <person name="Favreau P."/>
        </authorList>
    </citation>
    <scope>NUCLEOTIDE SEQUENCE [MRNA]</scope>
    <scope>DEAMIDATION AT ASN-48</scope>
    <scope>AMIDATION AT CYS-62</scope>
    <scope>MASS SPECTROMETRY</scope>
    <scope>IDENTIFICATION BY MASS SPECTROMETRY</scope>
    <source>
        <tissue>Venom</tissue>
        <tissue>Venom duct</tissue>
    </source>
</reference>
<reference key="2">
    <citation type="journal article" date="2006" name="J. Biol. Chem.">
        <title>Conus peptides: biodiversity-based discovery and exogenomics.</title>
        <authorList>
            <person name="Olivera B.M."/>
        </authorList>
    </citation>
    <scope>NUCLEOTIDE SEQUENCE [MRNA] OF 6-64</scope>
    <scope>REVIEW</scope>
    <source>
        <tissue>Venom duct</tissue>
    </source>
</reference>
<dbReference type="ConoServer" id="3711">
    <property type="toxin name" value="CnIH precursor"/>
</dbReference>
<dbReference type="GO" id="GO:0005576">
    <property type="term" value="C:extracellular region"/>
    <property type="evidence" value="ECO:0007669"/>
    <property type="project" value="UniProtKB-SubCell"/>
</dbReference>
<dbReference type="GO" id="GO:0035792">
    <property type="term" value="C:host cell postsynaptic membrane"/>
    <property type="evidence" value="ECO:0007669"/>
    <property type="project" value="UniProtKB-KW"/>
</dbReference>
<dbReference type="GO" id="GO:0030550">
    <property type="term" value="F:acetylcholine receptor inhibitor activity"/>
    <property type="evidence" value="ECO:0007669"/>
    <property type="project" value="UniProtKB-KW"/>
</dbReference>
<dbReference type="GO" id="GO:0099106">
    <property type="term" value="F:ion channel regulator activity"/>
    <property type="evidence" value="ECO:0007669"/>
    <property type="project" value="UniProtKB-KW"/>
</dbReference>
<dbReference type="GO" id="GO:0090729">
    <property type="term" value="F:toxin activity"/>
    <property type="evidence" value="ECO:0007669"/>
    <property type="project" value="UniProtKB-KW"/>
</dbReference>
<dbReference type="InterPro" id="IPR009958">
    <property type="entry name" value="Conotoxin_a-typ"/>
</dbReference>
<dbReference type="InterPro" id="IPR018072">
    <property type="entry name" value="Conotoxin_a-typ_CS"/>
</dbReference>
<dbReference type="Pfam" id="PF07365">
    <property type="entry name" value="Toxin_8"/>
    <property type="match status" value="1"/>
</dbReference>
<dbReference type="PROSITE" id="PS60014">
    <property type="entry name" value="ALPHA_CONOTOXIN"/>
    <property type="match status" value="1"/>
</dbReference>
<protein>
    <recommendedName>
        <fullName>Alpha-conotoxin CnIC</fullName>
    </recommendedName>
    <component>
        <recommendedName>
            <fullName>Alpha-conotoxin CnIF</fullName>
        </recommendedName>
    </component>
    <component>
        <recommendedName>
            <fullName>Alpha-conotoxin CnIH</fullName>
        </recommendedName>
        <alternativeName>
            <fullName>Alpha-conotoxin-like Cn1.1</fullName>
        </alternativeName>
        <alternativeName>
            <fullName>[Asp1]-CnIH</fullName>
        </alternativeName>
    </component>
</protein>
<evidence type="ECO:0000250" key="1"/>
<evidence type="ECO:0000250" key="2">
    <source>
        <dbReference type="UniProtKB" id="P01519"/>
    </source>
</evidence>
<evidence type="ECO:0000255" key="3"/>
<evidence type="ECO:0000269" key="4">
    <source>
    </source>
</evidence>
<evidence type="ECO:0000305" key="5"/>
<evidence type="ECO:0000305" key="6">
    <source>
    </source>
</evidence>
<organism>
    <name type="scientific">Conus consors</name>
    <name type="common">Singed cone</name>
    <dbReference type="NCBI Taxonomy" id="101297"/>
    <lineage>
        <taxon>Eukaryota</taxon>
        <taxon>Metazoa</taxon>
        <taxon>Spiralia</taxon>
        <taxon>Lophotrochozoa</taxon>
        <taxon>Mollusca</taxon>
        <taxon>Gastropoda</taxon>
        <taxon>Caenogastropoda</taxon>
        <taxon>Neogastropoda</taxon>
        <taxon>Conoidea</taxon>
        <taxon>Conidae</taxon>
        <taxon>Conus</taxon>
        <taxon>Pionoconus</taxon>
    </lineage>
</organism>
<comment type="function">
    <text evidence="1">Alpha-conotoxins act on postsynaptic membranes, they bind to the nicotinic acetylcholine receptors (nAChR) and thus inhibit them.</text>
</comment>
<comment type="subcellular location">
    <subcellularLocation>
        <location>Secreted</location>
    </subcellularLocation>
</comment>
<comment type="tissue specificity">
    <text>Expressed by the venom duct.</text>
</comment>
<comment type="domain">
    <text>The cysteine framework is I (CC-C-C). Alpha3/5 pattern.</text>
</comment>
<comment type="mass spectrometry">
    <molecule>Alpha-conotoxin CnIC</molecule>
    <text>CnIC.</text>
</comment>
<comment type="mass spectrometry">
    <molecule>Alpha-conotoxin CnIF</molecule>
    <text>CnIF.</text>
</comment>
<comment type="mass spectrometry">
    <molecule>Alpha-conotoxin CnIH</molecule>
    <text>CnIH.</text>
</comment>
<comment type="mass spectrometry">
    <molecule>Alpha-conotoxin CnIH</molecule>
    <text>Deamidated CnIH.</text>
</comment>
<comment type="miscellaneous">
    <text evidence="6">Found in injectable (milked) (IV) venom.</text>
</comment>
<comment type="similarity">
    <text evidence="5">Belongs to the conotoxin A superfamily.</text>
</comment>
<keyword id="KW-0008">Acetylcholine receptor inhibiting toxin</keyword>
<keyword id="KW-0027">Amidation</keyword>
<keyword id="KW-1015">Disulfide bond</keyword>
<keyword id="KW-0872">Ion channel impairing toxin</keyword>
<keyword id="KW-0528">Neurotoxin</keyword>
<keyword id="KW-0629">Postsynaptic neurotoxin</keyword>
<keyword id="KW-0964">Secreted</keyword>
<keyword id="KW-0732">Signal</keyword>
<keyword id="KW-0800">Toxin</keyword>
<proteinExistence type="evidence at protein level"/>
<feature type="signal peptide" evidence="3">
    <location>
        <begin position="1"/>
        <end position="21"/>
    </location>
</feature>
<feature type="propeptide" id="PRO_0000366054">
    <location>
        <begin position="22"/>
        <end position="47"/>
    </location>
</feature>
<feature type="peptide" id="PRO_0000366055" description="Alpha-conotoxin CnIH">
    <location>
        <begin position="48"/>
        <end position="62"/>
    </location>
</feature>
<feature type="peptide" id="PRO_0000419826" description="Alpha-conotoxin CnIF">
    <location>
        <begin position="49"/>
        <end position="62"/>
    </location>
</feature>
<feature type="peptide" id="PRO_0000419827" description="Alpha-conotoxin CnIC">
    <location>
        <begin position="51"/>
        <end position="62"/>
    </location>
</feature>
<feature type="modified residue" description="Deamidated asparagine; in CnIH; partial" evidence="4">
    <location>
        <position position="48"/>
    </location>
</feature>
<feature type="modified residue" description="Cysteine amide" evidence="4">
    <location>
        <position position="62"/>
    </location>
</feature>
<feature type="disulfide bond" evidence="2">
    <location>
        <begin position="51"/>
        <end position="56"/>
    </location>
</feature>
<feature type="disulfide bond" evidence="2">
    <location>
        <begin position="52"/>
        <end position="62"/>
    </location>
</feature>
<feature type="sequence conflict" description="In Ref. 2; no nucleotide entry." evidence="5" ref="2">
    <original>F</original>
    <variation>G</variation>
    <location>
        <position position="10"/>
    </location>
</feature>
<name>CA1C_CONCN</name>
<accession>P0C8U4</accession>